<dbReference type="EMBL" id="CP000152">
    <property type="protein sequence ID" value="ABB12283.1"/>
    <property type="molecule type" value="Genomic_DNA"/>
</dbReference>
<dbReference type="RefSeq" id="WP_011355766.1">
    <property type="nucleotide sequence ID" value="NC_007511.1"/>
</dbReference>
<dbReference type="SMR" id="Q393T3"/>
<dbReference type="GeneID" id="45098499"/>
<dbReference type="KEGG" id="bur:Bcep18194_B2172"/>
<dbReference type="PATRIC" id="fig|482957.22.peg.5929"/>
<dbReference type="HOGENOM" id="CLU_064928_1_0_4"/>
<dbReference type="Proteomes" id="UP000002705">
    <property type="component" value="Chromosome 2"/>
</dbReference>
<dbReference type="GO" id="GO:0005886">
    <property type="term" value="C:plasma membrane"/>
    <property type="evidence" value="ECO:0007669"/>
    <property type="project" value="UniProtKB-SubCell"/>
</dbReference>
<dbReference type="GO" id="GO:0051082">
    <property type="term" value="F:unfolded protein binding"/>
    <property type="evidence" value="ECO:0007669"/>
    <property type="project" value="UniProtKB-UniRule"/>
</dbReference>
<dbReference type="GO" id="GO:0016042">
    <property type="term" value="P:lipid catabolic process"/>
    <property type="evidence" value="ECO:0007669"/>
    <property type="project" value="UniProtKB-UniRule"/>
</dbReference>
<dbReference type="GO" id="GO:0006457">
    <property type="term" value="P:protein folding"/>
    <property type="evidence" value="ECO:0007669"/>
    <property type="project" value="UniProtKB-UniRule"/>
</dbReference>
<dbReference type="HAMAP" id="MF_00790">
    <property type="entry name" value="Lipase_chap"/>
    <property type="match status" value="1"/>
</dbReference>
<dbReference type="InterPro" id="IPR004961">
    <property type="entry name" value="Lipase_chaperone"/>
</dbReference>
<dbReference type="NCBIfam" id="NF002333">
    <property type="entry name" value="PRK01294.1-1"/>
    <property type="match status" value="1"/>
</dbReference>
<dbReference type="Pfam" id="PF03280">
    <property type="entry name" value="Lipase_chap"/>
    <property type="match status" value="1"/>
</dbReference>
<dbReference type="SUPFAM" id="SSF158855">
    <property type="entry name" value="Lipase chaperone-like"/>
    <property type="match status" value="1"/>
</dbReference>
<accession>Q393T3</accession>
<proteinExistence type="inferred from homology"/>
<feature type="chain" id="PRO_1000046914" description="Lipase chaperone">
    <location>
        <begin position="1"/>
        <end position="344"/>
    </location>
</feature>
<feature type="transmembrane region" description="Helical" evidence="2">
    <location>
        <begin position="14"/>
        <end position="34"/>
    </location>
</feature>
<keyword id="KW-0997">Cell inner membrane</keyword>
<keyword id="KW-1003">Cell membrane</keyword>
<keyword id="KW-0143">Chaperone</keyword>
<keyword id="KW-0442">Lipid degradation</keyword>
<keyword id="KW-0443">Lipid metabolism</keyword>
<keyword id="KW-0472">Membrane</keyword>
<keyword id="KW-0812">Transmembrane</keyword>
<keyword id="KW-1133">Transmembrane helix</keyword>
<reference key="1">
    <citation type="submission" date="2005-10" db="EMBL/GenBank/DDBJ databases">
        <title>Complete sequence of chromosome 2 of Burkholderia sp. 383.</title>
        <authorList>
            <consortium name="US DOE Joint Genome Institute"/>
            <person name="Copeland A."/>
            <person name="Lucas S."/>
            <person name="Lapidus A."/>
            <person name="Barry K."/>
            <person name="Detter J.C."/>
            <person name="Glavina T."/>
            <person name="Hammon N."/>
            <person name="Israni S."/>
            <person name="Pitluck S."/>
            <person name="Chain P."/>
            <person name="Malfatti S."/>
            <person name="Shin M."/>
            <person name="Vergez L."/>
            <person name="Schmutz J."/>
            <person name="Larimer F."/>
            <person name="Land M."/>
            <person name="Kyrpides N."/>
            <person name="Lykidis A."/>
            <person name="Richardson P."/>
        </authorList>
    </citation>
    <scope>NUCLEOTIDE SEQUENCE [LARGE SCALE GENOMIC DNA]</scope>
    <source>
        <strain>ATCC 17760 / DSM 23089 / LMG 22485 / NCIMB 9086 / R18194 / 383</strain>
    </source>
</reference>
<name>LIFO_BURL3</name>
<sequence>MTARGGRAPLARRAMVYGVVGLAAIAGVAMWSGASWHRGTGAASDSPDAPVAGGLAAAPPQAAVPASAGLPPSLAGSSAPRLPLDAGGHLAKSRAVRDFFDYCLTAQSDLSAAALDAFVVREIAAQLDGTVAQVEALDVWHRYRAYLDALAKLRDAGAVDKSDLGALQLALDQRASIAYRTLGDWSQPFFGAEQWRQRYDLARLKITRDPTLTDAQKAERLAALEQQMPADERAAQKRIDKQRAAIDQIAQLQKSGATPDAMRAQLTQTLGPEAAARVAQMQQDDASWQSRYTDYAAQRAQIESAGLSPQDRDAQITALRQRVFTKPGEAVRAASLDRGAGSAR</sequence>
<protein>
    <recommendedName>
        <fullName evidence="2">Lipase chaperone</fullName>
    </recommendedName>
    <alternativeName>
        <fullName evidence="2">Lipase activator protein</fullName>
    </alternativeName>
    <alternativeName>
        <fullName evidence="2">Lipase foldase</fullName>
    </alternativeName>
    <alternativeName>
        <fullName evidence="2">Lipase helper protein</fullName>
    </alternativeName>
    <alternativeName>
        <fullName evidence="2">Lipase modulator</fullName>
    </alternativeName>
</protein>
<evidence type="ECO:0000250" key="1"/>
<evidence type="ECO:0000255" key="2">
    <source>
        <dbReference type="HAMAP-Rule" id="MF_00790"/>
    </source>
</evidence>
<gene>
    <name evidence="2" type="primary">lifO</name>
    <name type="ordered locus">Bcep18194_B2172</name>
</gene>
<organism>
    <name type="scientific">Burkholderia lata (strain ATCC 17760 / DSM 23089 / LMG 22485 / NCIMB 9086 / R18194 / 383)</name>
    <dbReference type="NCBI Taxonomy" id="482957"/>
    <lineage>
        <taxon>Bacteria</taxon>
        <taxon>Pseudomonadati</taxon>
        <taxon>Pseudomonadota</taxon>
        <taxon>Betaproteobacteria</taxon>
        <taxon>Burkholderiales</taxon>
        <taxon>Burkholderiaceae</taxon>
        <taxon>Burkholderia</taxon>
        <taxon>Burkholderia cepacia complex</taxon>
    </lineage>
</organism>
<comment type="function">
    <text evidence="2">May be involved in the folding of the extracellular lipase during its passage through the periplasm.</text>
</comment>
<comment type="subcellular location">
    <subcellularLocation>
        <location evidence="2">Cell inner membrane</location>
        <topology evidence="2">Single-pass membrane protein</topology>
        <orientation evidence="1">Periplasmic side</orientation>
    </subcellularLocation>
</comment>
<comment type="similarity">
    <text evidence="2">Belongs to the lipase chaperone family.</text>
</comment>